<organism>
    <name type="scientific">Antheraea polyphemus</name>
    <name type="common">Polyphemus moth</name>
    <dbReference type="NCBI Taxonomy" id="7120"/>
    <lineage>
        <taxon>Eukaryota</taxon>
        <taxon>Metazoa</taxon>
        <taxon>Ecdysozoa</taxon>
        <taxon>Arthropoda</taxon>
        <taxon>Hexapoda</taxon>
        <taxon>Insecta</taxon>
        <taxon>Pterygota</taxon>
        <taxon>Neoptera</taxon>
        <taxon>Endopterygota</taxon>
        <taxon>Lepidoptera</taxon>
        <taxon>Glossata</taxon>
        <taxon>Ditrysia</taxon>
        <taxon>Bombycoidea</taxon>
        <taxon>Saturniidae</taxon>
        <taxon>Saturniinae</taxon>
        <taxon>Saturniini</taxon>
        <taxon>Antheraea</taxon>
    </lineage>
</organism>
<protein>
    <recommendedName>
        <fullName>Chorion class B protein PC10</fullName>
    </recommendedName>
</protein>
<reference key="1">
    <citation type="journal article" date="1979" name="Cell">
        <title>Evolution of two major chorion multigene families as inferred from cloned cDNA and protein sequences.</title>
        <authorList>
            <person name="Jones C.W."/>
            <person name="Rosenthal N."/>
            <person name="Rodakis G.C."/>
            <person name="Kafatos F.C."/>
        </authorList>
    </citation>
    <scope>NUCLEOTIDE SEQUENCE [MRNA]</scope>
</reference>
<name>CHB1_ANTPO</name>
<feature type="chain" id="PRO_0000168179" description="Chorion class B protein PC10">
    <location>
        <begin position="1" status="less than"/>
        <end position="130"/>
    </location>
</feature>
<feature type="region of interest" description="Left arm">
    <location>
        <begin position="1" status="less than"/>
        <end position="22"/>
    </location>
</feature>
<feature type="region of interest" description="Central domain">
    <location>
        <begin position="23"/>
        <end position="93"/>
    </location>
</feature>
<feature type="region of interest" description="Right arm (Gly-rich tandem repeats)">
    <location>
        <begin position="94"/>
        <end position="130"/>
    </location>
</feature>
<feature type="non-terminal residue">
    <location>
        <position position="1"/>
    </location>
</feature>
<accession>P02848</accession>
<proteinExistence type="evidence at transcript level"/>
<evidence type="ECO:0000305" key="1"/>
<sequence length="130" mass="12084">GAWNGRLGCGCGGIAPAAELAASYGGGLGVASASAIPPVGLGVASENAYEGCVEVAGNLPFLGTAGVEGVFPTAGAGVINYGCGNGALGITAERGYGAGIGYEGLGLGYGAGIGYKGYGLGGCGCGCGRL</sequence>
<keyword id="KW-0677">Repeat</keyword>
<comment type="function">
    <text>This protein is one of many from the eggshell of the silk moth.</text>
</comment>
<comment type="similarity">
    <text evidence="1">Belongs to the chorion protein family.</text>
</comment>
<dbReference type="EMBL" id="J01161">
    <property type="protein sequence ID" value="AAA27781.1"/>
    <property type="molecule type" value="mRNA"/>
</dbReference>
<dbReference type="PIR" id="A03338">
    <property type="entry name" value="JBAO10"/>
</dbReference>
<dbReference type="GO" id="GO:0042600">
    <property type="term" value="C:egg chorion"/>
    <property type="evidence" value="ECO:0007669"/>
    <property type="project" value="InterPro"/>
</dbReference>
<dbReference type="GO" id="GO:0005213">
    <property type="term" value="F:structural constituent of egg chorion"/>
    <property type="evidence" value="ECO:0007669"/>
    <property type="project" value="InterPro"/>
</dbReference>
<dbReference type="GO" id="GO:0007304">
    <property type="term" value="P:chorion-containing eggshell formation"/>
    <property type="evidence" value="ECO:0007669"/>
    <property type="project" value="InterPro"/>
</dbReference>
<dbReference type="InterPro" id="IPR002635">
    <property type="entry name" value="Chorion"/>
</dbReference>
<dbReference type="Pfam" id="PF01723">
    <property type="entry name" value="Chorion_1"/>
    <property type="match status" value="1"/>
</dbReference>